<organism>
    <name type="scientific">Eubacterium barkeri</name>
    <name type="common">Clostridium barkeri</name>
    <dbReference type="NCBI Taxonomy" id="1528"/>
    <lineage>
        <taxon>Bacteria</taxon>
        <taxon>Bacillati</taxon>
        <taxon>Bacillota</taxon>
        <taxon>Clostridia</taxon>
        <taxon>Eubacteriales</taxon>
        <taxon>Eubacteriaceae</taxon>
        <taxon>Eubacterium</taxon>
    </lineage>
</organism>
<reference evidence="6 7" key="1">
    <citation type="journal article" date="2006" name="Proc. Natl. Acad. Sci. U.S.A.">
        <title>Molecular and functional analysis of nicotinate catabolism in Eubacterium barkeri.</title>
        <authorList>
            <person name="Alhapel A."/>
            <person name="Darley D.J."/>
            <person name="Wagener N."/>
            <person name="Eckel E."/>
            <person name="Elsner N."/>
            <person name="Pierik A.J."/>
        </authorList>
    </citation>
    <scope>NUCLEOTIDE SEQUENCE [GENOMIC DNA]</scope>
    <scope>PATHWAY</scope>
    <source>
        <strain evidence="7">ATCC 25849 / DSM 1223 / JCM 1389 / NCIMB 10623 / VKM B-1775 / VPI 5359</strain>
    </source>
</reference>
<reference evidence="6" key="2">
    <citation type="journal article" date="1984" name="Hoppe-Seyler's Z. Physiol. Chem.">
        <title>Nicotinic acid metabolism. Dimethylmaleate hydratase.</title>
        <authorList>
            <person name="Kollmann-Koch A."/>
            <person name="Eggerer H."/>
        </authorList>
    </citation>
    <scope>CATALYTIC ACTIVITY</scope>
    <scope>BIOPHYSICOCHEMICAL PROPERTIES</scope>
    <scope>INDUCTION</scope>
    <source>
        <strain evidence="4">ATCC 25849 / DSM 1223 / JCM 1389 / NCIMB 10623 / VKM B-1775 / VPI 5359</strain>
    </source>
</reference>
<comment type="catalytic activity">
    <reaction evidence="4">
        <text>(2R,3S)-2,3-dimethylmalate = dimethylmaleate + H2O</text>
        <dbReference type="Rhea" id="RHEA:20253"/>
        <dbReference type="ChEBI" id="CHEBI:15377"/>
        <dbReference type="ChEBI" id="CHEBI:17081"/>
        <dbReference type="ChEBI" id="CHEBI:57422"/>
        <dbReference type="EC" id="4.2.1.85"/>
    </reaction>
</comment>
<comment type="cofactor">
    <cofactor evidence="1 2">
        <name>[4Fe-4S] cluster</name>
        <dbReference type="ChEBI" id="CHEBI:49883"/>
    </cofactor>
    <text evidence="1 2">Binds 1 [4Fe-4S] cluster per subunit.</text>
</comment>
<comment type="biophysicochemical properties">
    <kinetics>
        <KM evidence="4">3.1 mM for dimethylmaleate</KM>
    </kinetics>
    <phDependence>
        <text evidence="4">Highly active between pH 6.5 and 9.0. Retains 50% and 10% of maximum activity at pH 5.0 and 4.5, respectively.</text>
    </phDependence>
</comment>
<comment type="pathway">
    <text evidence="3">Cofactor degradation; nicotinate degradation; propanoate and pyruvate from 6-hydroxynicotinate: step 7/8.</text>
</comment>
<comment type="subunit">
    <text evidence="1">Heterodimer of a large and a small subunit.</text>
</comment>
<comment type="induction">
    <text evidence="4">By nicotinic acid.</text>
</comment>
<comment type="similarity">
    <text evidence="2">Belongs to the aconitase/IPM isomerase family. LeuC type 2 subfamily.</text>
</comment>
<keyword id="KW-0004">4Fe-4S</keyword>
<keyword id="KW-0408">Iron</keyword>
<keyword id="KW-0411">Iron-sulfur</keyword>
<keyword id="KW-0456">Lyase</keyword>
<keyword id="KW-0479">Metal-binding</keyword>
<gene>
    <name type="primary">dmdA</name>
</gene>
<dbReference type="EC" id="4.2.1.85"/>
<dbReference type="EMBL" id="DQ310789">
    <property type="protein sequence ID" value="ABC88408.1"/>
    <property type="molecule type" value="Genomic_DNA"/>
</dbReference>
<dbReference type="RefSeq" id="WP_090245331.1">
    <property type="nucleotide sequence ID" value="NZ_FNOU01000012.1"/>
</dbReference>
<dbReference type="SMR" id="Q0QLE2"/>
<dbReference type="STRING" id="1528.SAMN04488579_1124"/>
<dbReference type="KEGG" id="ag:ABC88408"/>
<dbReference type="OrthoDB" id="9802769at2"/>
<dbReference type="BioCyc" id="MetaCyc:MONOMER-13676"/>
<dbReference type="UniPathway" id="UPA01010">
    <property type="reaction ID" value="UER01018"/>
</dbReference>
<dbReference type="GO" id="GO:0003861">
    <property type="term" value="F:3-isopropylmalate dehydratase activity"/>
    <property type="evidence" value="ECO:0007669"/>
    <property type="project" value="UniProtKB-UniRule"/>
</dbReference>
<dbReference type="GO" id="GO:0051539">
    <property type="term" value="F:4 iron, 4 sulfur cluster binding"/>
    <property type="evidence" value="ECO:0007669"/>
    <property type="project" value="UniProtKB-KW"/>
</dbReference>
<dbReference type="GO" id="GO:0047868">
    <property type="term" value="F:dimethylmaleate hydratase activity"/>
    <property type="evidence" value="ECO:0000314"/>
    <property type="project" value="UniProtKB"/>
</dbReference>
<dbReference type="GO" id="GO:0046872">
    <property type="term" value="F:metal ion binding"/>
    <property type="evidence" value="ECO:0007669"/>
    <property type="project" value="UniProtKB-KW"/>
</dbReference>
<dbReference type="GO" id="GO:0009098">
    <property type="term" value="P:L-leucine biosynthetic process"/>
    <property type="evidence" value="ECO:0007669"/>
    <property type="project" value="UniProtKB-UniRule"/>
</dbReference>
<dbReference type="GO" id="GO:1901848">
    <property type="term" value="P:nicotinate catabolic process"/>
    <property type="evidence" value="ECO:0000314"/>
    <property type="project" value="UniProtKB"/>
</dbReference>
<dbReference type="CDD" id="cd01583">
    <property type="entry name" value="IPMI"/>
    <property type="match status" value="1"/>
</dbReference>
<dbReference type="FunFam" id="3.30.499.10:FF:000029">
    <property type="entry name" value="3-isopropylmalate dehydratase large subunit"/>
    <property type="match status" value="1"/>
</dbReference>
<dbReference type="Gene3D" id="3.30.499.10">
    <property type="entry name" value="Aconitase, domain 3"/>
    <property type="match status" value="2"/>
</dbReference>
<dbReference type="HAMAP" id="MF_01027">
    <property type="entry name" value="LeuC_type2"/>
    <property type="match status" value="1"/>
</dbReference>
<dbReference type="InterPro" id="IPR015931">
    <property type="entry name" value="Acnase/IPM_dHydase_lsu_aba_1/3"/>
</dbReference>
<dbReference type="InterPro" id="IPR001030">
    <property type="entry name" value="Acoase/IPM_deHydtase_lsu_aba"/>
</dbReference>
<dbReference type="InterPro" id="IPR018136">
    <property type="entry name" value="Aconitase_4Fe-4S_BS"/>
</dbReference>
<dbReference type="InterPro" id="IPR036008">
    <property type="entry name" value="Aconitase_4Fe-4S_dom"/>
</dbReference>
<dbReference type="InterPro" id="IPR011826">
    <property type="entry name" value="HAcnase/IPMdehydase_lsu_prok"/>
</dbReference>
<dbReference type="InterPro" id="IPR006251">
    <property type="entry name" value="Homoacnase/IPMdehydase_lsu"/>
</dbReference>
<dbReference type="InterPro" id="IPR050067">
    <property type="entry name" value="IPM_dehydratase_rel_enz"/>
</dbReference>
<dbReference type="InterPro" id="IPR033941">
    <property type="entry name" value="IPMI_cat"/>
</dbReference>
<dbReference type="InterPro" id="IPR011823">
    <property type="entry name" value="IsopropMal_deHydtase_lsu_bac"/>
</dbReference>
<dbReference type="NCBIfam" id="TIGR01343">
    <property type="entry name" value="hacA_fam"/>
    <property type="match status" value="1"/>
</dbReference>
<dbReference type="NCBIfam" id="TIGR02086">
    <property type="entry name" value="IPMI_arch"/>
    <property type="match status" value="1"/>
</dbReference>
<dbReference type="NCBIfam" id="TIGR02083">
    <property type="entry name" value="LEU2"/>
    <property type="match status" value="1"/>
</dbReference>
<dbReference type="NCBIfam" id="NF001614">
    <property type="entry name" value="PRK00402.1"/>
    <property type="match status" value="1"/>
</dbReference>
<dbReference type="PANTHER" id="PTHR43822:SF16">
    <property type="entry name" value="3-ISOPROPYLMALATE DEHYDRATASE LARGE SUBUNIT 2"/>
    <property type="match status" value="1"/>
</dbReference>
<dbReference type="PANTHER" id="PTHR43822">
    <property type="entry name" value="HOMOACONITASE, MITOCHONDRIAL-RELATED"/>
    <property type="match status" value="1"/>
</dbReference>
<dbReference type="Pfam" id="PF00330">
    <property type="entry name" value="Aconitase"/>
    <property type="match status" value="1"/>
</dbReference>
<dbReference type="PRINTS" id="PR00415">
    <property type="entry name" value="ACONITASE"/>
</dbReference>
<dbReference type="SUPFAM" id="SSF53732">
    <property type="entry name" value="Aconitase iron-sulfur domain"/>
    <property type="match status" value="1"/>
</dbReference>
<dbReference type="PROSITE" id="PS00450">
    <property type="entry name" value="ACONITASE_1"/>
    <property type="match status" value="1"/>
</dbReference>
<dbReference type="PROSITE" id="PS01244">
    <property type="entry name" value="ACONITASE_2"/>
    <property type="match status" value="1"/>
</dbReference>
<sequence>MGMTMTQKILAAHASLDSVKAGDLIMADLDMVLANDITGPVAINVFGTIDKEKVFDKDKIALVPDHFAPAKDIKSAQQCKQVRCFACDQEITNYFEIGEMGIEHALLPEKGLVAAGDVVIGADSHTCTYGALGAFSTGVGSTDMAVGMATGKAWFKVPAALRFNLTGTLNKNVSGKDLILHIIGMIGVDGALYRSMEFTGPGVACLSMDDRFTISNMAIEAGGKNGIFPVDDQTISYMEEHGSGDYKVYAADADAVYEKTFDIDLSQLKSTVAFPHLPENTKTVDAIEEPVTIDQVVIGSCTNGRFEDLKRAADILRGKHVKKGVRMLVIPATHKIYLDAMEAGYLREFIEAGATISTPTCGPCLGGYMGILAEGERCVSTTNRNFVGRMGHVDSEVYLASPEVAAASAILGRIATPDEL</sequence>
<name>DMDA_EUBBA</name>
<protein>
    <recommendedName>
        <fullName evidence="5">2,3-dimethylmalate dehydratase large subunit</fullName>
        <ecNumber>4.2.1.85</ecNumber>
    </recommendedName>
</protein>
<proteinExistence type="evidence at protein level"/>
<feature type="chain" id="PRO_0000403994" description="2,3-dimethylmalate dehydratase large subunit">
    <location>
        <begin position="1"/>
        <end position="420"/>
    </location>
</feature>
<feature type="binding site" evidence="1 2">
    <location>
        <position position="301"/>
    </location>
    <ligand>
        <name>[4Fe-4S] cluster</name>
        <dbReference type="ChEBI" id="CHEBI:49883"/>
    </ligand>
</feature>
<feature type="binding site" evidence="1 2">
    <location>
        <position position="361"/>
    </location>
    <ligand>
        <name>[4Fe-4S] cluster</name>
        <dbReference type="ChEBI" id="CHEBI:49883"/>
    </ligand>
</feature>
<feature type="binding site" evidence="1 2">
    <location>
        <position position="364"/>
    </location>
    <ligand>
        <name>[4Fe-4S] cluster</name>
        <dbReference type="ChEBI" id="CHEBI:49883"/>
    </ligand>
</feature>
<accession>Q0QLE2</accession>
<evidence type="ECO:0000250" key="1">
    <source>
        <dbReference type="UniProtKB" id="A6LPX4"/>
    </source>
</evidence>
<evidence type="ECO:0000255" key="2">
    <source>
        <dbReference type="HAMAP-Rule" id="MF_01027"/>
    </source>
</evidence>
<evidence type="ECO:0000269" key="3">
    <source>
    </source>
</evidence>
<evidence type="ECO:0000269" key="4">
    <source>
    </source>
</evidence>
<evidence type="ECO:0000303" key="5">
    <source>
    </source>
</evidence>
<evidence type="ECO:0000305" key="6"/>
<evidence type="ECO:0000312" key="7">
    <source>
        <dbReference type="EMBL" id="ABC88408.1"/>
    </source>
</evidence>